<reference key="1">
    <citation type="journal article" date="2001" name="J. Biol. Chem.">
        <title>Identification of a novel chloride channel expressed in the endoplasmic reticulum, Golgi apparatus, and nucleus.</title>
        <authorList>
            <person name="Nagasawa M."/>
            <person name="Kanzaki M."/>
            <person name="Iino Y."/>
            <person name="Morishita Y."/>
            <person name="Kojima I."/>
        </authorList>
    </citation>
    <scope>NUCLEOTIDE SEQUENCE [MRNA] (ISOFORMS 1; 2; 3 AND 4)</scope>
</reference>
<reference key="2">
    <citation type="journal article" date="1998" name="DNA Res.">
        <title>Prediction of the coding sequences of unidentified human genes. XI. The complete sequences of 100 new cDNA clones from brain which code for large proteins in vitro.</title>
        <authorList>
            <person name="Nagase T."/>
            <person name="Ishikawa K."/>
            <person name="Suyama M."/>
            <person name="Kikuno R."/>
            <person name="Miyajima N."/>
            <person name="Tanaka A."/>
            <person name="Kotani H."/>
            <person name="Nomura N."/>
            <person name="Ohara O."/>
        </authorList>
    </citation>
    <scope>NUCLEOTIDE SEQUENCE [LARGE SCALE MRNA] (ISOFORM 1)</scope>
    <source>
        <tissue>Brain</tissue>
    </source>
</reference>
<reference key="3">
    <citation type="journal article" date="2006" name="Nature">
        <title>The DNA sequence and biological annotation of human chromosome 1.</title>
        <authorList>
            <person name="Gregory S.G."/>
            <person name="Barlow K.F."/>
            <person name="McLay K.E."/>
            <person name="Kaul R."/>
            <person name="Swarbreck D."/>
            <person name="Dunham A."/>
            <person name="Scott C.E."/>
            <person name="Howe K.L."/>
            <person name="Woodfine K."/>
            <person name="Spencer C.C.A."/>
            <person name="Jones M.C."/>
            <person name="Gillson C."/>
            <person name="Searle S."/>
            <person name="Zhou Y."/>
            <person name="Kokocinski F."/>
            <person name="McDonald L."/>
            <person name="Evans R."/>
            <person name="Phillips K."/>
            <person name="Atkinson A."/>
            <person name="Cooper R."/>
            <person name="Jones C."/>
            <person name="Hall R.E."/>
            <person name="Andrews T.D."/>
            <person name="Lloyd C."/>
            <person name="Ainscough R."/>
            <person name="Almeida J.P."/>
            <person name="Ambrose K.D."/>
            <person name="Anderson F."/>
            <person name="Andrew R.W."/>
            <person name="Ashwell R.I.S."/>
            <person name="Aubin K."/>
            <person name="Babbage A.K."/>
            <person name="Bagguley C.L."/>
            <person name="Bailey J."/>
            <person name="Beasley H."/>
            <person name="Bethel G."/>
            <person name="Bird C.P."/>
            <person name="Bray-Allen S."/>
            <person name="Brown J.Y."/>
            <person name="Brown A.J."/>
            <person name="Buckley D."/>
            <person name="Burton J."/>
            <person name="Bye J."/>
            <person name="Carder C."/>
            <person name="Chapman J.C."/>
            <person name="Clark S.Y."/>
            <person name="Clarke G."/>
            <person name="Clee C."/>
            <person name="Cobley V."/>
            <person name="Collier R.E."/>
            <person name="Corby N."/>
            <person name="Coville G.J."/>
            <person name="Davies J."/>
            <person name="Deadman R."/>
            <person name="Dunn M."/>
            <person name="Earthrowl M."/>
            <person name="Ellington A.G."/>
            <person name="Errington H."/>
            <person name="Frankish A."/>
            <person name="Frankland J."/>
            <person name="French L."/>
            <person name="Garner P."/>
            <person name="Garnett J."/>
            <person name="Gay L."/>
            <person name="Ghori M.R.J."/>
            <person name="Gibson R."/>
            <person name="Gilby L.M."/>
            <person name="Gillett W."/>
            <person name="Glithero R.J."/>
            <person name="Grafham D.V."/>
            <person name="Griffiths C."/>
            <person name="Griffiths-Jones S."/>
            <person name="Grocock R."/>
            <person name="Hammond S."/>
            <person name="Harrison E.S.I."/>
            <person name="Hart E."/>
            <person name="Haugen E."/>
            <person name="Heath P.D."/>
            <person name="Holmes S."/>
            <person name="Holt K."/>
            <person name="Howden P.J."/>
            <person name="Hunt A.R."/>
            <person name="Hunt S.E."/>
            <person name="Hunter G."/>
            <person name="Isherwood J."/>
            <person name="James R."/>
            <person name="Johnson C."/>
            <person name="Johnson D."/>
            <person name="Joy A."/>
            <person name="Kay M."/>
            <person name="Kershaw J.K."/>
            <person name="Kibukawa M."/>
            <person name="Kimberley A.M."/>
            <person name="King A."/>
            <person name="Knights A.J."/>
            <person name="Lad H."/>
            <person name="Laird G."/>
            <person name="Lawlor S."/>
            <person name="Leongamornlert D.A."/>
            <person name="Lloyd D.M."/>
            <person name="Loveland J."/>
            <person name="Lovell J."/>
            <person name="Lush M.J."/>
            <person name="Lyne R."/>
            <person name="Martin S."/>
            <person name="Mashreghi-Mohammadi M."/>
            <person name="Matthews L."/>
            <person name="Matthews N.S.W."/>
            <person name="McLaren S."/>
            <person name="Milne S."/>
            <person name="Mistry S."/>
            <person name="Moore M.J.F."/>
            <person name="Nickerson T."/>
            <person name="O'Dell C.N."/>
            <person name="Oliver K."/>
            <person name="Palmeiri A."/>
            <person name="Palmer S.A."/>
            <person name="Parker A."/>
            <person name="Patel D."/>
            <person name="Pearce A.V."/>
            <person name="Peck A.I."/>
            <person name="Pelan S."/>
            <person name="Phelps K."/>
            <person name="Phillimore B.J."/>
            <person name="Plumb R."/>
            <person name="Rajan J."/>
            <person name="Raymond C."/>
            <person name="Rouse G."/>
            <person name="Saenphimmachak C."/>
            <person name="Sehra H.K."/>
            <person name="Sheridan E."/>
            <person name="Shownkeen R."/>
            <person name="Sims S."/>
            <person name="Skuce C.D."/>
            <person name="Smith M."/>
            <person name="Steward C."/>
            <person name="Subramanian S."/>
            <person name="Sycamore N."/>
            <person name="Tracey A."/>
            <person name="Tromans A."/>
            <person name="Van Helmond Z."/>
            <person name="Wall M."/>
            <person name="Wallis J.M."/>
            <person name="White S."/>
            <person name="Whitehead S.L."/>
            <person name="Wilkinson J.E."/>
            <person name="Willey D.L."/>
            <person name="Williams H."/>
            <person name="Wilming L."/>
            <person name="Wray P.W."/>
            <person name="Wu Z."/>
            <person name="Coulson A."/>
            <person name="Vaudin M."/>
            <person name="Sulston J.E."/>
            <person name="Durbin R.M."/>
            <person name="Hubbard T."/>
            <person name="Wooster R."/>
            <person name="Dunham I."/>
            <person name="Carter N.P."/>
            <person name="McVean G."/>
            <person name="Ross M.T."/>
            <person name="Harrow J."/>
            <person name="Olson M.V."/>
            <person name="Beck S."/>
            <person name="Rogers J."/>
            <person name="Bentley D.R."/>
        </authorList>
    </citation>
    <scope>NUCLEOTIDE SEQUENCE [LARGE SCALE GENOMIC DNA]</scope>
</reference>
<reference key="4">
    <citation type="submission" date="2005-09" db="EMBL/GenBank/DDBJ databases">
        <authorList>
            <person name="Mural R.J."/>
            <person name="Istrail S."/>
            <person name="Sutton G.G."/>
            <person name="Florea L."/>
            <person name="Halpern A.L."/>
            <person name="Mobarry C.M."/>
            <person name="Lippert R."/>
            <person name="Walenz B."/>
            <person name="Shatkay H."/>
            <person name="Dew I."/>
            <person name="Miller J.R."/>
            <person name="Flanigan M.J."/>
            <person name="Edwards N.J."/>
            <person name="Bolanos R."/>
            <person name="Fasulo D."/>
            <person name="Halldorsson B.V."/>
            <person name="Hannenhalli S."/>
            <person name="Turner R."/>
            <person name="Yooseph S."/>
            <person name="Lu F."/>
            <person name="Nusskern D.R."/>
            <person name="Shue B.C."/>
            <person name="Zheng X.H."/>
            <person name="Zhong F."/>
            <person name="Delcher A.L."/>
            <person name="Huson D.H."/>
            <person name="Kravitz S.A."/>
            <person name="Mouchard L."/>
            <person name="Reinert K."/>
            <person name="Remington K.A."/>
            <person name="Clark A.G."/>
            <person name="Waterman M.S."/>
            <person name="Eichler E.E."/>
            <person name="Adams M.D."/>
            <person name="Hunkapiller M.W."/>
            <person name="Myers E.W."/>
            <person name="Venter J.C."/>
        </authorList>
    </citation>
    <scope>NUCLEOTIDE SEQUENCE [LARGE SCALE GENOMIC DNA]</scope>
</reference>
<reference key="5">
    <citation type="journal article" date="2004" name="Genome Res.">
        <title>The status, quality, and expansion of the NIH full-length cDNA project: the Mammalian Gene Collection (MGC).</title>
        <authorList>
            <consortium name="The MGC Project Team"/>
        </authorList>
    </citation>
    <scope>NUCLEOTIDE SEQUENCE [LARGE SCALE MRNA] (ISOFORM 2)</scope>
    <source>
        <tissue>Skin</tissue>
    </source>
</reference>
<reference key="6">
    <citation type="journal article" date="2006" name="Cell">
        <title>Global, in vivo, and site-specific phosphorylation dynamics in signaling networks.</title>
        <authorList>
            <person name="Olsen J.V."/>
            <person name="Blagoev B."/>
            <person name="Gnad F."/>
            <person name="Macek B."/>
            <person name="Kumar C."/>
            <person name="Mortensen P."/>
            <person name="Mann M."/>
        </authorList>
    </citation>
    <scope>PHOSPHORYLATION [LARGE SCALE ANALYSIS] AT SER-438</scope>
    <scope>IDENTIFICATION BY MASS SPECTROMETRY [LARGE SCALE ANALYSIS]</scope>
    <source>
        <tissue>Cervix carcinoma</tissue>
    </source>
</reference>
<reference key="7">
    <citation type="journal article" date="2007" name="J. Proteome Res.">
        <title>Improved titanium dioxide enrichment of phosphopeptides from HeLa cells and high confident phosphopeptide identification by cross-validation of MS/MS and MS/MS/MS spectra.</title>
        <authorList>
            <person name="Yu L.R."/>
            <person name="Zhu Z."/>
            <person name="Chan K.C."/>
            <person name="Issaq H.J."/>
            <person name="Dimitrov D.S."/>
            <person name="Veenstra T.D."/>
        </authorList>
    </citation>
    <scope>PHOSPHORYLATION [LARGE SCALE ANALYSIS] AT SER-438</scope>
    <scope>IDENTIFICATION BY MASS SPECTROMETRY [LARGE SCALE ANALYSIS]</scope>
    <source>
        <tissue>Cervix carcinoma</tissue>
    </source>
</reference>
<reference key="8">
    <citation type="journal article" date="2008" name="Proc. Natl. Acad. Sci. U.S.A.">
        <title>A quantitative atlas of mitotic phosphorylation.</title>
        <authorList>
            <person name="Dephoure N."/>
            <person name="Zhou C."/>
            <person name="Villen J."/>
            <person name="Beausoleil S.A."/>
            <person name="Bakalarski C.E."/>
            <person name="Elledge S.J."/>
            <person name="Gygi S.P."/>
        </authorList>
    </citation>
    <scope>PHOSPHORYLATION [LARGE SCALE ANALYSIS] AT SER-438; SER-464; SER-509; SER-524 AND SER-532</scope>
    <scope>IDENTIFICATION BY MASS SPECTROMETRY [LARGE SCALE ANALYSIS]</scope>
    <source>
        <tissue>Cervix carcinoma</tissue>
    </source>
</reference>
<reference key="9">
    <citation type="journal article" date="2009" name="Anal. Chem.">
        <title>Lys-N and trypsin cover complementary parts of the phosphoproteome in a refined SCX-based approach.</title>
        <authorList>
            <person name="Gauci S."/>
            <person name="Helbig A.O."/>
            <person name="Slijper M."/>
            <person name="Krijgsveld J."/>
            <person name="Heck A.J."/>
            <person name="Mohammed S."/>
        </authorList>
    </citation>
    <scope>IDENTIFICATION BY MASS SPECTROMETRY [LARGE SCALE ANALYSIS]</scope>
</reference>
<reference key="10">
    <citation type="journal article" date="2010" name="Sci. Signal.">
        <title>Quantitative phosphoproteomics reveals widespread full phosphorylation site occupancy during mitosis.</title>
        <authorList>
            <person name="Olsen J.V."/>
            <person name="Vermeulen M."/>
            <person name="Santamaria A."/>
            <person name="Kumar C."/>
            <person name="Miller M.L."/>
            <person name="Jensen L.J."/>
            <person name="Gnad F."/>
            <person name="Cox J."/>
            <person name="Jensen T.S."/>
            <person name="Nigg E.A."/>
            <person name="Brunak S."/>
            <person name="Mann M."/>
        </authorList>
    </citation>
    <scope>PHOSPHORYLATION [LARGE SCALE ANALYSIS] AT THR-482; SER-524 AND SER-532</scope>
    <scope>IDENTIFICATION BY MASS SPECTROMETRY [LARGE SCALE ANALYSIS]</scope>
    <source>
        <tissue>Cervix carcinoma</tissue>
    </source>
</reference>
<reference key="11">
    <citation type="journal article" date="2011" name="BMC Syst. Biol.">
        <title>Initial characterization of the human central proteome.</title>
        <authorList>
            <person name="Burkard T.R."/>
            <person name="Planyavsky M."/>
            <person name="Kaupe I."/>
            <person name="Breitwieser F.P."/>
            <person name="Buerckstuemmer T."/>
            <person name="Bennett K.L."/>
            <person name="Superti-Furga G."/>
            <person name="Colinge J."/>
        </authorList>
    </citation>
    <scope>IDENTIFICATION BY MASS SPECTROMETRY [LARGE SCALE ANALYSIS]</scope>
</reference>
<reference key="12">
    <citation type="journal article" date="2011" name="Sci. Signal.">
        <title>System-wide temporal characterization of the proteome and phosphoproteome of human embryonic stem cell differentiation.</title>
        <authorList>
            <person name="Rigbolt K.T."/>
            <person name="Prokhorova T.A."/>
            <person name="Akimov V."/>
            <person name="Henningsen J."/>
            <person name="Johansen P.T."/>
            <person name="Kratchmarova I."/>
            <person name="Kassem M."/>
            <person name="Mann M."/>
            <person name="Olsen J.V."/>
            <person name="Blagoev B."/>
        </authorList>
    </citation>
    <scope>PHOSPHORYLATION [LARGE SCALE ANALYSIS] AT SER-509</scope>
    <scope>IDENTIFICATION BY MASS SPECTROMETRY [LARGE SCALE ANALYSIS]</scope>
</reference>
<reference key="13">
    <citation type="journal article" date="2013" name="J. Proteome Res.">
        <title>Toward a comprehensive characterization of a human cancer cell phosphoproteome.</title>
        <authorList>
            <person name="Zhou H."/>
            <person name="Di Palma S."/>
            <person name="Preisinger C."/>
            <person name="Peng M."/>
            <person name="Polat A.N."/>
            <person name="Heck A.J."/>
            <person name="Mohammed S."/>
        </authorList>
    </citation>
    <scope>PHOSPHORYLATION [LARGE SCALE ANALYSIS] AT SER-438; THR-482; SER-509; SER-524 AND SER-532</scope>
    <scope>IDENTIFICATION BY MASS SPECTROMETRY [LARGE SCALE ANALYSIS]</scope>
    <source>
        <tissue>Cervix carcinoma</tissue>
        <tissue>Erythroleukemia</tissue>
    </source>
</reference>
<reference key="14">
    <citation type="journal article" date="2014" name="J. Proteomics">
        <title>An enzyme assisted RP-RPLC approach for in-depth analysis of human liver phosphoproteome.</title>
        <authorList>
            <person name="Bian Y."/>
            <person name="Song C."/>
            <person name="Cheng K."/>
            <person name="Dong M."/>
            <person name="Wang F."/>
            <person name="Huang J."/>
            <person name="Sun D."/>
            <person name="Wang L."/>
            <person name="Ye M."/>
            <person name="Zou H."/>
        </authorList>
    </citation>
    <scope>PHOSPHORYLATION [LARGE SCALE ANALYSIS] AT SER-438</scope>
    <scope>IDENTIFICATION BY MASS SPECTROMETRY [LARGE SCALE ANALYSIS]</scope>
    <source>
        <tissue>Liver</tissue>
    </source>
</reference>
<reference key="15">
    <citation type="journal article" date="2015" name="J. Neurosci.">
        <title>Loss of Clcc1 results in ER stress, misfolded protein accumulation, and neurodegeneration.</title>
        <authorList>
            <person name="Jia Y."/>
            <person name="Jucius T.J."/>
            <person name="Cook S.A."/>
            <person name="Ackerman S.L."/>
        </authorList>
    </citation>
    <scope>FUNCTION</scope>
    <scope>SUBCELLULAR LOCATION</scope>
</reference>
<reference key="16">
    <citation type="journal article" date="2019" name="Nat. Commun.">
        <title>Regulation of the ER stress response by a mitochondrial microprotein.</title>
        <authorList>
            <person name="Chu Q."/>
            <person name="Martinez T.F."/>
            <person name="Novak S.W."/>
            <person name="Donaldson C.J."/>
            <person name="Tan D."/>
            <person name="Vaughan J.M."/>
            <person name="Chang T."/>
            <person name="Diedrich J.K."/>
            <person name="Andrade L."/>
            <person name="Kim A."/>
            <person name="Zhang T."/>
            <person name="Manor U."/>
            <person name="Saghatelian A."/>
        </authorList>
    </citation>
    <scope>SUBCELLULAR LOCATION</scope>
    <scope>INTERACTION WITH PIGBOS1</scope>
</reference>
<reference key="17">
    <citation type="journal article" date="2023" name="Cell Res.">
        <title>Disruption of ER ion homeostasis maintained by an ER anion channel CLCC1 contributes to ALS-like pathologies.</title>
        <authorList>
            <person name="Guo L."/>
            <person name="Mao Q."/>
            <person name="He J."/>
            <person name="Liu X."/>
            <person name="Piao X."/>
            <person name="Luo L."/>
            <person name="Hao X."/>
            <person name="Yu H."/>
            <person name="Song Q."/>
            <person name="Xiao B."/>
            <person name="Fan D."/>
            <person name="Gao Z."/>
            <person name="Jia Y."/>
        </authorList>
    </citation>
    <scope>FUNCTION</scope>
    <scope>TRANSPORTER ACTIVITY</scope>
    <scope>ACTIVITY REGULATION</scope>
    <scope>SUBCELLULAR LOCATION</scope>
    <scope>SUBUNIT</scope>
    <scope>SITE</scope>
    <scope>CHARACTERIZATION OF VARIANT RP32 GLU-25</scope>
    <scope>MUTAGENESIS OF ASP-152; ASP-153; GLU-175; ASP-176 AND ASP-181</scope>
    <scope>ASSOCIATION WITH AMYOTROPHIC LATERAL SCLEROSIS</scope>
    <scope>CHARACTERIZATION OF VARIANTS TYR-10; THR-29; 239-GLN--GLY-551 DEL; ARG-263; ARG-267; GLY-368 AND SER-515</scope>
</reference>
<reference key="18">
    <citation type="journal article" date="2005" name="Hum. Genet.">
        <title>Severe autosomal recessive retinitis pigmentosa maps to chromosome 1p13.3-p21.2 between D1S2896 and D1S457 but outside ABCA4.</title>
        <authorList>
            <person name="Zhang Q."/>
            <person name="Zulfiqar F."/>
            <person name="Xiao X."/>
            <person name="Riazuddin S.A."/>
            <person name="Ayyagari R."/>
            <person name="Sabar F."/>
            <person name="Caruso R."/>
            <person name="Sieving P.A."/>
            <person name="Riazuddin S."/>
            <person name="Hejtmancik J.F."/>
        </authorList>
    </citation>
    <scope>INVOLVEMENT IN RP32</scope>
</reference>
<reference key="19">
    <citation type="journal article" date="2018" name="PLoS Genet.">
        <title>Mutation in the intracellular chloride channel CLCC1 associated with autosomal recessive retinitis pigmentosa.</title>
        <authorList>
            <person name="Li L."/>
            <person name="Jiao X."/>
            <person name="D'Atri I."/>
            <person name="Ono F."/>
            <person name="Nelson R."/>
            <person name="Chan C.C."/>
            <person name="Nakaya N."/>
            <person name="Ma Z."/>
            <person name="Ma Y."/>
            <person name="Cai X."/>
            <person name="Zhang L."/>
            <person name="Lin S."/>
            <person name="Hameed A."/>
            <person name="Chioza B.A."/>
            <person name="Hardy H."/>
            <person name="Arno G."/>
            <person name="Hull S."/>
            <person name="Khan M.I."/>
            <person name="Fasham J."/>
            <person name="Harlalka G.V."/>
            <person name="Michaelides M."/>
            <person name="Moore A.T."/>
            <person name="Coban Akdemir Z.H."/>
            <person name="Jhangiani S."/>
            <person name="Lupski J.R."/>
            <person name="Cremers F.P.M."/>
            <person name="Qamar R."/>
            <person name="Salman A."/>
            <person name="Chilton J."/>
            <person name="Self J."/>
            <person name="Ayyagari R."/>
            <person name="Kabir F."/>
            <person name="Naeem M.A."/>
            <person name="Ali M."/>
            <person name="Akram J."/>
            <person name="Sieving P.A."/>
            <person name="Riazuddin S."/>
            <person name="Baple E.L."/>
            <person name="Riazuddin S.A."/>
            <person name="Crosby A.H."/>
            <person name="Hejtmancik J.F."/>
        </authorList>
    </citation>
    <scope>INVOLVEMENT IN RP32</scope>
    <scope>VARIANT RP32 GLU-25</scope>
    <scope>FUNCTION</scope>
    <scope>TRANSPORTER ACTIVITY</scope>
    <scope>INTERACTION WITH CALR</scope>
    <scope>SUBCELLULAR LOCATION</scope>
    <scope>TISSUE SPECIFICITY</scope>
    <scope>CHARACTERIZATION OF VARIANT RP32 GLU-25</scope>
</reference>
<name>CLCC1_HUMAN</name>
<protein>
    <recommendedName>
        <fullName>Chloride channel CLIC-like protein 1</fullName>
    </recommendedName>
    <alternativeName>
        <fullName evidence="11">ER anion channel 1</fullName>
        <shortName evidence="11">ERAC1</shortName>
    </alternativeName>
    <alternativeName>
        <fullName evidence="9">Mid-1-related chloride channel protein</fullName>
    </alternativeName>
</protein>
<proteinExistence type="evidence at protein level"/>
<keyword id="KW-0025">Alternative splicing</keyword>
<keyword id="KW-0868">Chloride</keyword>
<keyword id="KW-0869">Chloride channel</keyword>
<keyword id="KW-0256">Endoplasmic reticulum</keyword>
<keyword id="KW-0407">Ion channel</keyword>
<keyword id="KW-0406">Ion transport</keyword>
<keyword id="KW-0472">Membrane</keyword>
<keyword id="KW-0597">Phosphoprotein</keyword>
<keyword id="KW-1267">Proteomics identification</keyword>
<keyword id="KW-1185">Reference proteome</keyword>
<keyword id="KW-0682">Retinitis pigmentosa</keyword>
<keyword id="KW-0732">Signal</keyword>
<keyword id="KW-0812">Transmembrane</keyword>
<keyword id="KW-1133">Transmembrane helix</keyword>
<keyword id="KW-0813">Transport</keyword>
<gene>
    <name evidence="11 13" type="primary">CLCC1</name>
    <name type="synonym">KIAA0761</name>
    <name evidence="9" type="synonym">MCLC</name>
</gene>
<feature type="signal peptide" evidence="2">
    <location>
        <begin position="1"/>
        <end position="18"/>
    </location>
</feature>
<feature type="chain" id="PRO_0000297682" description="Chloride channel CLIC-like protein 1">
    <location>
        <begin position="19"/>
        <end position="551"/>
    </location>
</feature>
<feature type="topological domain" description="Lumenal" evidence="1">
    <location>
        <begin position="19"/>
        <end position="184"/>
    </location>
</feature>
<feature type="transmembrane region" description="Helical" evidence="2">
    <location>
        <begin position="185"/>
        <end position="205"/>
    </location>
</feature>
<feature type="topological domain" description="Cytoplasmic" evidence="1">
    <location>
        <begin position="206"/>
        <end position="216"/>
    </location>
</feature>
<feature type="transmembrane region" description="Helical" evidence="2">
    <location>
        <begin position="217"/>
        <end position="237"/>
    </location>
</feature>
<feature type="topological domain" description="Lumenal" evidence="1">
    <location>
        <begin position="238"/>
        <end position="329"/>
    </location>
</feature>
<feature type="transmembrane region" description="Helical" evidence="2">
    <location>
        <begin position="330"/>
        <end position="350"/>
    </location>
</feature>
<feature type="topological domain" description="Cytoplasmic" evidence="1">
    <location>
        <begin position="351"/>
        <end position="551"/>
    </location>
</feature>
<feature type="region of interest" description="Disordered" evidence="3">
    <location>
        <begin position="363"/>
        <end position="415"/>
    </location>
</feature>
<feature type="region of interest" description="Disordered" evidence="3">
    <location>
        <begin position="447"/>
        <end position="551"/>
    </location>
</feature>
<feature type="compositionally biased region" description="Basic and acidic residues" evidence="3">
    <location>
        <begin position="380"/>
        <end position="389"/>
    </location>
</feature>
<feature type="compositionally biased region" description="Polar residues" evidence="3">
    <location>
        <begin position="488"/>
        <end position="508"/>
    </location>
</feature>
<feature type="site" description="Ca(2+)-mediated inhibition of channel activity" evidence="8">
    <location>
        <position position="25"/>
    </location>
</feature>
<feature type="site" description="Ca(2+)-mediated inhibition of channel activity" evidence="8">
    <location>
        <position position="181"/>
    </location>
</feature>
<feature type="modified residue" description="Phosphoserine" evidence="14 15 16 19 20">
    <location>
        <position position="438"/>
    </location>
</feature>
<feature type="modified residue" description="Phosphoserine" evidence="16">
    <location>
        <position position="464"/>
    </location>
</feature>
<feature type="modified residue" description="Phosphothreonine" evidence="17 19">
    <location>
        <position position="482"/>
    </location>
</feature>
<feature type="modified residue" description="Phosphoserine" evidence="16 18 19">
    <location>
        <position position="509"/>
    </location>
</feature>
<feature type="modified residue" description="Phosphoserine" evidence="16 17 19">
    <location>
        <position position="524"/>
    </location>
</feature>
<feature type="modified residue" description="Phosphoserine" evidence="16 17 19">
    <location>
        <position position="532"/>
    </location>
</feature>
<feature type="splice variant" id="VSP_027347" description="In isoform 4." evidence="9">
    <location>
        <begin position="114"/>
        <end position="298"/>
    </location>
</feature>
<feature type="splice variant" id="VSP_027348" description="In isoform 3." evidence="9">
    <location>
        <begin position="114"/>
        <end position="234"/>
    </location>
</feature>
<feature type="splice variant" id="VSP_027349" description="In isoform 2." evidence="9 10">
    <location>
        <begin position="114"/>
        <end position="163"/>
    </location>
</feature>
<feature type="sequence variant" id="VAR_089498" description="Found in a patient with sporadic ALS; dbSNP:rs372449194." evidence="8">
    <original>C</original>
    <variation>Y</variation>
    <location>
        <position position="10"/>
    </location>
</feature>
<feature type="sequence variant" id="VAR_083125" description="In RP32; reduces ion channel activity; no impact on interaction with CALR; no impact on ER localization; impairs Ca(2+) binding relieving Ca(2+)-dependent inhibition of channel activity; when associated with R-181; dbSNP:rs750180668." evidence="6 8">
    <original>D</original>
    <variation>E</variation>
    <location>
        <position position="25"/>
    </location>
</feature>
<feature type="sequence variant" id="VAR_089499" description="Found in a patient with sporadic ALS; does not affect chloride steady state in the ER." evidence="8">
    <original>M</original>
    <variation>T</variation>
    <location>
        <position position="29"/>
    </location>
</feature>
<feature type="sequence variant" id="VAR_089500" description="Found in a patient with sporadic ALS; dbSNP:rs770795683." evidence="8">
    <location>
        <begin position="239"/>
        <end position="551"/>
    </location>
</feature>
<feature type="sequence variant" id="VAR_089501" description="Found in two patients with sporadic ALS; decreases protein stability and expression; decreases single channel activity; increases chloride retention in the ER while decreasing ATP-induced Ca(2+) release; in a knockin mouse model causes enhanced ER stress and motor neuron degeneration in compound heterozygosity with a hypomorphic allele; leads to embryonic lethality with a KO allele." evidence="8">
    <original>S</original>
    <variation>R</variation>
    <location>
        <position position="263"/>
    </location>
</feature>
<feature type="sequence variant" id="VAR_089502" description="Found in a patient with sporadic ALS; decreases protein stability and expression; decreases protein stability and expression; decreases single channel activity; increases chloride retention in the ER while decreasing ATP-induced Ca(2+) release; in a knockin mouse model causes enhanced ER stress and motor neuron degeneration in compound heterozygosity with a hypomorphic allele; leads to embryonic lethality with a KO allele; dbSNP:rs1458236736." evidence="8">
    <original>W</original>
    <variation>R</variation>
    <location>
        <position position="267"/>
    </location>
</feature>
<feature type="sequence variant" id="VAR_089503" description="Found in a patient with sporadic ALS." evidence="8">
    <original>S</original>
    <variation>G</variation>
    <location>
        <position position="368"/>
    </location>
</feature>
<feature type="sequence variant" id="VAR_034673" description="In dbSNP:rs168107.">
    <original>S</original>
    <variation>R</variation>
    <location>
        <position position="368"/>
    </location>
</feature>
<feature type="sequence variant" id="VAR_089504" description="Found in a patient with sporadic ALS; dbSNP:rs202199249." evidence="8">
    <original>A</original>
    <variation>S</variation>
    <location>
        <position position="515"/>
    </location>
</feature>
<feature type="mutagenesis site" description="Does not affect Ca(2+) binding; when associated with R-153." evidence="8">
    <original>D</original>
    <variation>R</variation>
    <location>
        <position position="152"/>
    </location>
</feature>
<feature type="mutagenesis site" description="Does not affect Ca(2+) binding; when associated with R-152." evidence="8">
    <original>D</original>
    <variation>R</variation>
    <location>
        <position position="153"/>
    </location>
</feature>
<feature type="mutagenesis site" description="Decreases the affinity for Ca(2+); when associated with R-176." evidence="8">
    <original>E</original>
    <variation>R</variation>
    <location>
        <position position="175"/>
    </location>
</feature>
<feature type="mutagenesis site" description="Decreases the affinity for Ca(2+); when associated with R-175." evidence="8">
    <original>D</original>
    <variation>R</variation>
    <location>
        <position position="176"/>
    </location>
</feature>
<feature type="mutagenesis site" description="Impairs Ca(2+) binding relieving Ca(2+)-dependent inhibition of channel activity; when associated with R-25." evidence="8">
    <original>D</original>
    <variation>R</variation>
    <location>
        <position position="181"/>
    </location>
</feature>
<evidence type="ECO:0000250" key="1">
    <source>
        <dbReference type="UniProtKB" id="Q99LI2"/>
    </source>
</evidence>
<evidence type="ECO:0000255" key="2"/>
<evidence type="ECO:0000256" key="3">
    <source>
        <dbReference type="SAM" id="MobiDB-lite"/>
    </source>
</evidence>
<evidence type="ECO:0000269" key="4">
    <source>
    </source>
</evidence>
<evidence type="ECO:0000269" key="5">
    <source>
    </source>
</evidence>
<evidence type="ECO:0000269" key="6">
    <source>
    </source>
</evidence>
<evidence type="ECO:0000269" key="7">
    <source>
    </source>
</evidence>
<evidence type="ECO:0000269" key="8">
    <source>
    </source>
</evidence>
<evidence type="ECO:0000303" key="9">
    <source>
    </source>
</evidence>
<evidence type="ECO:0000303" key="10">
    <source>
    </source>
</evidence>
<evidence type="ECO:0000303" key="11">
    <source>
    </source>
</evidence>
<evidence type="ECO:0000305" key="12"/>
<evidence type="ECO:0000312" key="13">
    <source>
        <dbReference type="HGNC" id="HGNC:29675"/>
    </source>
</evidence>
<evidence type="ECO:0007744" key="14">
    <source>
    </source>
</evidence>
<evidence type="ECO:0007744" key="15">
    <source>
    </source>
</evidence>
<evidence type="ECO:0007744" key="16">
    <source>
    </source>
</evidence>
<evidence type="ECO:0007744" key="17">
    <source>
    </source>
</evidence>
<evidence type="ECO:0007744" key="18">
    <source>
    </source>
</evidence>
<evidence type="ECO:0007744" key="19">
    <source>
    </source>
</evidence>
<evidence type="ECO:0007744" key="20">
    <source>
    </source>
</evidence>
<sequence>MLCSLLLCECLLLVAGYAHDDDWIDPTDMLNYDAASGTMRKSQAKYGISGEKDVSPDLSCADEISECYHKLDSLTYKIDECEKKKREDYESQSNPVFRRYLNKILIEAGKLGLPDENKGDMHYDAEIILKRETLLEIQKFLNGEDWKPGALDDALSDILINFKFHDFETWKWRFEDSFGVDPYNVLMVLLCLLCIVVLVATELWTYVRWYTQLRRVLIISFLFSLGWNWMYLYKLAFAQHQAEVAKMEPLNNVCAKKMDWTGSIWEWFRSSWTYKDDPCQKYYELLLVNPIWLVPPTKALAVTFTTFVTEPLKHIGKGTGEFIKALMKEIPALLHLPVLIIMALAILSFCYGAGKSVHVLRHIGGPESEPPQALRPRDRRRQEEIDYRPDGGAGDADFHYRGQMGPTEQGPYAKTYEGRREILRERDVDLRFQTGNKSPEVLRAFDVPDAEAREHPTVVPSHKSPVLDTKPKETGGILGEGTPKESSTESSQSAKPVSGQDTSGNTEGSPAAEKAQLKSEAAGSPDQGSTYSPARGVAGPRGQDPVSSPCG</sequence>
<comment type="function">
    <text evidence="1 5 6 8">Anion-selective channel with Ca(2+)-dependent and voltage-independent gating. Permeable to small monovalent anions with selectivity for bromide &gt; chloride &gt; nitrate &gt; fluoride (By similarity). Operates in the endoplasmic reticulum (ER) membrane where it mediates chloride efflux to compensate for the loss of positive charges from the ER lumen upon Ca(2+) release. Contributes to the maintenance of ER Ca(2+) pools and activation of unfolded protein response to prevent accumulation of misfolded proteins in the ER lumen. Particularly involved in ER homeostasis mechanisms underlying motor neurons and retinal photoreceptors survival (By similarity) (PubMed:25698737, PubMed:30157172, PubMed:37142673).</text>
</comment>
<comment type="catalytic activity">
    <reaction evidence="6 8">
        <text>chloride(in) = chloride(out)</text>
        <dbReference type="Rhea" id="RHEA:29823"/>
        <dbReference type="ChEBI" id="CHEBI:17996"/>
    </reaction>
</comment>
<comment type="catalytic activity">
    <reaction evidence="1">
        <text>bromide(in) = bromide(out)</text>
        <dbReference type="Rhea" id="RHEA:75383"/>
        <dbReference type="ChEBI" id="CHEBI:15858"/>
    </reaction>
</comment>
<comment type="catalytic activity">
    <reaction evidence="1">
        <text>nitrate(in) = nitrate(out)</text>
        <dbReference type="Rhea" id="RHEA:34923"/>
        <dbReference type="ChEBI" id="CHEBI:17632"/>
    </reaction>
</comment>
<comment type="catalytic activity">
    <reaction evidence="1">
        <text>fluoride(in) = fluoride(out)</text>
        <dbReference type="Rhea" id="RHEA:76159"/>
        <dbReference type="ChEBI" id="CHEBI:17051"/>
    </reaction>
</comment>
<comment type="activity regulation">
    <text evidence="8">Inhibited by ER lumenal Ca(2+).</text>
</comment>
<comment type="subunit">
    <text evidence="6 7 8">Homomultimers (PubMed:37142673). Interacts with mitochondrial protein PIGBOS1 (via C-terminus); the interaction occurs at the mitochondria-associated endoplasmic reticulum (ER) membrane, a zone of contact between the ER and mitochondrial membranes, but does not appear to play a role in ER-mitochondria tethering and is not affected by ER stress (PubMed:31653868). Interacts with CALR (PubMed:30157172).</text>
</comment>
<comment type="interaction">
    <interactant intactId="EBI-2836109">
        <id>Q96S66</id>
    </interactant>
    <interactant intactId="EBI-26657479">
        <id>A0A0B4J2F0</id>
        <label>PIGBOS1</label>
    </interactant>
    <organismsDiffer>false</organismsDiffer>
    <experiments>11</experiments>
</comment>
<comment type="interaction">
    <interactant intactId="EBI-2836109">
        <id>Q96S66</id>
    </interactant>
    <interactant intactId="EBI-53898658">
        <id>Q6ZMD2</id>
        <label>SPNS3</label>
    </interactant>
    <organismsDiffer>false</organismsDiffer>
    <experiments>2</experiments>
</comment>
<comment type="subcellular location">
    <subcellularLocation>
        <location evidence="5 6 7 8">Endoplasmic reticulum membrane</location>
        <topology evidence="2">Multi-pass membrane protein</topology>
    </subcellularLocation>
    <text evidence="1 7">Within the endoplasmic reticulum (ER), localizes to the mitochondria-associated ER membrane, a zone of contact between the ER and mitochondrial membranes. Enriched in the rough ER.</text>
</comment>
<comment type="alternative products">
    <event type="alternative splicing"/>
    <isoform>
        <id>Q96S66-1</id>
        <name>1</name>
        <name>hMCLC-1</name>
        <sequence type="displayed"/>
    </isoform>
    <isoform>
        <id>Q96S66-2</id>
        <name>2</name>
        <name>hMCLC-2</name>
        <sequence type="described" ref="VSP_027349"/>
    </isoform>
    <isoform>
        <id>Q96S66-3</id>
        <name>3</name>
        <name>hMCLC-3</name>
        <sequence type="described" ref="VSP_027348"/>
    </isoform>
    <isoform>
        <id>Q96S66-4</id>
        <name>4</name>
        <name>hMCLC-4</name>
        <sequence type="described" ref="VSP_027347"/>
    </isoform>
</comment>
<comment type="tissue specificity">
    <text evidence="6">Expressed in the retina of the eye, with extensive expression in the lamina cribrosa, optic nerve, ganglion cell layer, inner nuclear layer, outer nuclear layer and retinal pigment epithelium.</text>
</comment>
<comment type="disease" evidence="4 6 8">
    <disease id="DI-05880">
        <name>Retinitis pigmentosa 32</name>
        <acronym>RP32</acronym>
        <description>A form of retinitis pigmentosa, a retinal dystrophy belonging to the group of pigmentary retinopathies. Retinitis pigmentosa is characterized by retinal pigment deposits visible on fundus examination and primary loss of rod photoreceptor cells followed by secondary loss of cone photoreceptors. Patients typically have night vision blindness and loss of midperipheral visual field. RP32 inheritance is autosomal recessive.</description>
        <dbReference type="MIM" id="609913"/>
    </disease>
    <text>The disease is caused by variants affecting the gene represented in this entry.</text>
</comment>
<comment type="disease">
    <text evidence="8">Rare variants in CLCC1 may be associated with amyotrophic lateral sclerosis.</text>
</comment>
<comment type="similarity">
    <text evidence="12">Belongs to the chloride channel MCLC family.</text>
</comment>
<dbReference type="EMBL" id="AB052915">
    <property type="protein sequence ID" value="BAB59018.1"/>
    <property type="molecule type" value="mRNA"/>
</dbReference>
<dbReference type="EMBL" id="AB052916">
    <property type="protein sequence ID" value="BAB79261.1"/>
    <property type="molecule type" value="mRNA"/>
</dbReference>
<dbReference type="EMBL" id="AB052917">
    <property type="protein sequence ID" value="BAB79262.1"/>
    <property type="molecule type" value="mRNA"/>
</dbReference>
<dbReference type="EMBL" id="AB052918">
    <property type="protein sequence ID" value="BAB79263.1"/>
    <property type="molecule type" value="mRNA"/>
</dbReference>
<dbReference type="EMBL" id="AB018304">
    <property type="protein sequence ID" value="BAA34481.2"/>
    <property type="molecule type" value="mRNA"/>
</dbReference>
<dbReference type="EMBL" id="AL449266">
    <property type="status" value="NOT_ANNOTATED_CDS"/>
    <property type="molecule type" value="Genomic_DNA"/>
</dbReference>
<dbReference type="EMBL" id="CH471122">
    <property type="protein sequence ID" value="EAW56345.1"/>
    <property type="molecule type" value="Genomic_DNA"/>
</dbReference>
<dbReference type="EMBL" id="CH471122">
    <property type="protein sequence ID" value="EAW56346.1"/>
    <property type="molecule type" value="Genomic_DNA"/>
</dbReference>
<dbReference type="EMBL" id="BC002939">
    <property type="protein sequence ID" value="AAH02939.1"/>
    <property type="molecule type" value="mRNA"/>
</dbReference>
<dbReference type="CCDS" id="CCDS41362.1">
    <molecule id="Q96S66-1"/>
</dbReference>
<dbReference type="CCDS" id="CCDS60214.1">
    <molecule id="Q96S66-4"/>
</dbReference>
<dbReference type="CCDS" id="CCDS60215.1">
    <molecule id="Q96S66-3"/>
</dbReference>
<dbReference type="CCDS" id="CCDS793.1">
    <molecule id="Q96S66-2"/>
</dbReference>
<dbReference type="RefSeq" id="NP_001041675.1">
    <molecule id="Q96S66-1"/>
    <property type="nucleotide sequence ID" value="NM_001048210.3"/>
</dbReference>
<dbReference type="RefSeq" id="NP_001265131.1">
    <molecule id="Q96S66-3"/>
    <property type="nucleotide sequence ID" value="NM_001278202.2"/>
</dbReference>
<dbReference type="RefSeq" id="NP_001265132.1">
    <molecule id="Q96S66-4"/>
    <property type="nucleotide sequence ID" value="NM_001278203.1"/>
</dbReference>
<dbReference type="RefSeq" id="NP_001364387.1">
    <molecule id="Q96S66-1"/>
    <property type="nucleotide sequence ID" value="NM_001377458.1"/>
</dbReference>
<dbReference type="RefSeq" id="NP_001364388.1">
    <molecule id="Q96S66-1"/>
    <property type="nucleotide sequence ID" value="NM_001377459.1"/>
</dbReference>
<dbReference type="RefSeq" id="NP_001364389.1">
    <molecule id="Q96S66-1"/>
    <property type="nucleotide sequence ID" value="NM_001377460.1"/>
</dbReference>
<dbReference type="RefSeq" id="NP_001364390.1">
    <molecule id="Q96S66-1"/>
    <property type="nucleotide sequence ID" value="NM_001377461.1"/>
</dbReference>
<dbReference type="RefSeq" id="NP_001364391.1">
    <molecule id="Q96S66-1"/>
    <property type="nucleotide sequence ID" value="NM_001377462.1"/>
</dbReference>
<dbReference type="RefSeq" id="NP_001364392.1">
    <molecule id="Q96S66-1"/>
    <property type="nucleotide sequence ID" value="NM_001377463.1"/>
</dbReference>
<dbReference type="RefSeq" id="NP_001364393.1">
    <molecule id="Q96S66-1"/>
    <property type="nucleotide sequence ID" value="NM_001377464.1"/>
</dbReference>
<dbReference type="RefSeq" id="NP_001364394.1">
    <molecule id="Q96S66-1"/>
    <property type="nucleotide sequence ID" value="NM_001377465.1"/>
</dbReference>
<dbReference type="RefSeq" id="NP_001364395.1">
    <molecule id="Q96S66-1"/>
    <property type="nucleotide sequence ID" value="NM_001377466.1"/>
</dbReference>
<dbReference type="RefSeq" id="NP_001364396.1">
    <molecule id="Q96S66-1"/>
    <property type="nucleotide sequence ID" value="NM_001377467.1"/>
</dbReference>
<dbReference type="RefSeq" id="NP_001364397.1">
    <molecule id="Q96S66-1"/>
    <property type="nucleotide sequence ID" value="NM_001377468.1"/>
</dbReference>
<dbReference type="RefSeq" id="NP_055942.1">
    <molecule id="Q96S66-2"/>
    <property type="nucleotide sequence ID" value="NM_015127.5"/>
</dbReference>
<dbReference type="BioGRID" id="116769">
    <property type="interactions" value="213"/>
</dbReference>
<dbReference type="FunCoup" id="Q96S66">
    <property type="interactions" value="2185"/>
</dbReference>
<dbReference type="IntAct" id="Q96S66">
    <property type="interactions" value="82"/>
</dbReference>
<dbReference type="MINT" id="Q96S66"/>
<dbReference type="STRING" id="9606.ENSP00000349456"/>
<dbReference type="TCDB" id="1.A.36.1.1">
    <property type="family name" value="the intracellular chloride channel (icc) family"/>
</dbReference>
<dbReference type="GlyGen" id="Q96S66">
    <property type="glycosylation" value="5 sites, 2 O-linked glycans (5 sites)"/>
</dbReference>
<dbReference type="iPTMnet" id="Q96S66"/>
<dbReference type="MetOSite" id="Q96S66"/>
<dbReference type="PhosphoSitePlus" id="Q96S66"/>
<dbReference type="SwissPalm" id="Q96S66"/>
<dbReference type="BioMuta" id="CLCC1"/>
<dbReference type="DMDM" id="74752121"/>
<dbReference type="jPOST" id="Q96S66"/>
<dbReference type="MassIVE" id="Q96S66"/>
<dbReference type="PaxDb" id="9606-ENSP00000349456"/>
<dbReference type="PeptideAtlas" id="Q96S66"/>
<dbReference type="ProteomicsDB" id="78077">
    <molecule id="Q96S66-1"/>
</dbReference>
<dbReference type="ProteomicsDB" id="78078">
    <molecule id="Q96S66-2"/>
</dbReference>
<dbReference type="ProteomicsDB" id="78079">
    <molecule id="Q96S66-3"/>
</dbReference>
<dbReference type="ProteomicsDB" id="78080">
    <molecule id="Q96S66-4"/>
</dbReference>
<dbReference type="Pumba" id="Q96S66"/>
<dbReference type="Antibodypedia" id="2391">
    <property type="antibodies" value="150 antibodies from 29 providers"/>
</dbReference>
<dbReference type="DNASU" id="23155"/>
<dbReference type="Ensembl" id="ENST00000302500.5">
    <molecule id="Q96S66-3"/>
    <property type="protein sequence ID" value="ENSP00000306552.4"/>
    <property type="gene ID" value="ENSG00000121940.17"/>
</dbReference>
<dbReference type="Ensembl" id="ENST00000348264.6">
    <molecule id="Q96S66-4"/>
    <property type="protein sequence ID" value="ENSP00000337243.2"/>
    <property type="gene ID" value="ENSG00000121940.17"/>
</dbReference>
<dbReference type="Ensembl" id="ENST00000356970.6">
    <molecule id="Q96S66-1"/>
    <property type="protein sequence ID" value="ENSP00000349456.2"/>
    <property type="gene ID" value="ENSG00000121940.17"/>
</dbReference>
<dbReference type="Ensembl" id="ENST00000369969.7">
    <molecule id="Q96S66-1"/>
    <property type="protein sequence ID" value="ENSP00000358986.3"/>
    <property type="gene ID" value="ENSG00000121940.17"/>
</dbReference>
<dbReference type="Ensembl" id="ENST00000369970.8">
    <molecule id="Q96S66-2"/>
    <property type="protein sequence ID" value="ENSP00000358987.3"/>
    <property type="gene ID" value="ENSG00000121940.17"/>
</dbReference>
<dbReference type="Ensembl" id="ENST00000674849.1">
    <molecule id="Q96S66-1"/>
    <property type="protein sequence ID" value="ENSP00000502251.1"/>
    <property type="gene ID" value="ENSG00000121940.17"/>
</dbReference>
<dbReference type="Ensembl" id="ENST00000675508.1">
    <molecule id="Q96S66-1"/>
    <property type="protein sequence ID" value="ENSP00000502836.1"/>
    <property type="gene ID" value="ENSG00000121940.17"/>
</dbReference>
<dbReference type="Ensembl" id="ENST00000675654.1">
    <molecule id="Q96S66-1"/>
    <property type="protein sequence ID" value="ENSP00000502648.1"/>
    <property type="gene ID" value="ENSG00000121940.17"/>
</dbReference>
<dbReference type="Ensembl" id="ENST00000675956.1">
    <molecule id="Q96S66-1"/>
    <property type="protein sequence ID" value="ENSP00000502457.1"/>
    <property type="gene ID" value="ENSG00000121940.17"/>
</dbReference>
<dbReference type="Ensembl" id="ENST00000685014.1">
    <molecule id="Q96S66-1"/>
    <property type="protein sequence ID" value="ENSP00000510582.1"/>
    <property type="gene ID" value="ENSG00000121940.17"/>
</dbReference>
<dbReference type="Ensembl" id="ENST00000685104.1">
    <molecule id="Q96S66-1"/>
    <property type="protein sequence ID" value="ENSP00000508473.1"/>
    <property type="gene ID" value="ENSG00000121940.17"/>
</dbReference>
<dbReference type="Ensembl" id="ENST00000685497.1">
    <molecule id="Q96S66-1"/>
    <property type="protein sequence ID" value="ENSP00000509420.1"/>
    <property type="gene ID" value="ENSG00000121940.17"/>
</dbReference>
<dbReference type="Ensembl" id="ENST00000685540.1">
    <molecule id="Q96S66-1"/>
    <property type="protein sequence ID" value="ENSP00000510352.1"/>
    <property type="gene ID" value="ENSG00000121940.17"/>
</dbReference>
<dbReference type="Ensembl" id="ENST00000685628.1">
    <molecule id="Q96S66-2"/>
    <property type="protein sequence ID" value="ENSP00000509075.1"/>
    <property type="gene ID" value="ENSG00000121940.17"/>
</dbReference>
<dbReference type="Ensembl" id="ENST00000686078.1">
    <molecule id="Q96S66-1"/>
    <property type="protein sequence ID" value="ENSP00000510291.1"/>
    <property type="gene ID" value="ENSG00000121940.17"/>
</dbReference>
<dbReference type="Ensembl" id="ENST00000686434.1">
    <molecule id="Q96S66-2"/>
    <property type="protein sequence ID" value="ENSP00000508570.1"/>
    <property type="gene ID" value="ENSG00000121940.17"/>
</dbReference>
<dbReference type="Ensembl" id="ENST00000686776.1">
    <molecule id="Q96S66-1"/>
    <property type="protein sequence ID" value="ENSP00000509013.1"/>
    <property type="gene ID" value="ENSG00000121940.17"/>
</dbReference>
<dbReference type="Ensembl" id="ENST00000686821.1">
    <molecule id="Q96S66-1"/>
    <property type="protein sequence ID" value="ENSP00000508563.1"/>
    <property type="gene ID" value="ENSG00000121940.17"/>
</dbReference>
<dbReference type="Ensembl" id="ENST00000687226.1">
    <molecule id="Q96S66-2"/>
    <property type="protein sequence ID" value="ENSP00000509162.1"/>
    <property type="gene ID" value="ENSG00000121940.17"/>
</dbReference>
<dbReference type="Ensembl" id="ENST00000687328.1">
    <molecule id="Q96S66-1"/>
    <property type="protein sequence ID" value="ENSP00000508816.1"/>
    <property type="gene ID" value="ENSG00000121940.17"/>
</dbReference>
<dbReference type="Ensembl" id="ENST00000687449.1">
    <molecule id="Q96S66-1"/>
    <property type="protein sequence ID" value="ENSP00000508982.1"/>
    <property type="gene ID" value="ENSG00000121940.17"/>
</dbReference>
<dbReference type="Ensembl" id="ENST00000687591.1">
    <molecule id="Q96S66-1"/>
    <property type="protein sequence ID" value="ENSP00000509036.1"/>
    <property type="gene ID" value="ENSG00000121940.17"/>
</dbReference>
<dbReference type="Ensembl" id="ENST00000687734.1">
    <molecule id="Q96S66-2"/>
    <property type="protein sequence ID" value="ENSP00000510543.1"/>
    <property type="gene ID" value="ENSG00000121940.17"/>
</dbReference>
<dbReference type="Ensembl" id="ENST00000687865.1">
    <molecule id="Q96S66-1"/>
    <property type="protein sequence ID" value="ENSP00000509218.1"/>
    <property type="gene ID" value="ENSG00000121940.17"/>
</dbReference>
<dbReference type="Ensembl" id="ENST00000688285.1">
    <molecule id="Q96S66-1"/>
    <property type="protein sequence ID" value="ENSP00000509990.1"/>
    <property type="gene ID" value="ENSG00000121940.17"/>
</dbReference>
<dbReference type="Ensembl" id="ENST00000688610.1">
    <molecule id="Q96S66-3"/>
    <property type="protein sequence ID" value="ENSP00000510524.1"/>
    <property type="gene ID" value="ENSG00000121940.17"/>
</dbReference>
<dbReference type="Ensembl" id="ENST00000688778.1">
    <molecule id="Q96S66-1"/>
    <property type="protein sequence ID" value="ENSP00000510715.1"/>
    <property type="gene ID" value="ENSG00000121940.17"/>
</dbReference>
<dbReference type="Ensembl" id="ENST00000689189.1">
    <molecule id="Q96S66-1"/>
    <property type="protein sequence ID" value="ENSP00000510675.1"/>
    <property type="gene ID" value="ENSG00000121940.17"/>
</dbReference>
<dbReference type="Ensembl" id="ENST00000689351.1">
    <molecule id="Q96S66-1"/>
    <property type="protein sequence ID" value="ENSP00000508607.1"/>
    <property type="gene ID" value="ENSG00000121940.17"/>
</dbReference>
<dbReference type="Ensembl" id="ENST00000689359.1">
    <molecule id="Q96S66-1"/>
    <property type="protein sequence ID" value="ENSP00000508884.1"/>
    <property type="gene ID" value="ENSG00000121940.17"/>
</dbReference>
<dbReference type="Ensembl" id="ENST00000689991.1">
    <molecule id="Q96S66-1"/>
    <property type="protein sequence ID" value="ENSP00000508952.1"/>
    <property type="gene ID" value="ENSG00000121940.17"/>
</dbReference>
<dbReference type="Ensembl" id="ENST00000690509.1">
    <molecule id="Q96S66-1"/>
    <property type="protein sequence ID" value="ENSP00000510142.1"/>
    <property type="gene ID" value="ENSG00000121940.17"/>
</dbReference>
<dbReference type="Ensembl" id="ENST00000690756.1">
    <molecule id="Q96S66-1"/>
    <property type="protein sequence ID" value="ENSP00000509544.1"/>
    <property type="gene ID" value="ENSG00000121940.17"/>
</dbReference>
<dbReference type="Ensembl" id="ENST00000690781.1">
    <molecule id="Q96S66-1"/>
    <property type="protein sequence ID" value="ENSP00000510137.1"/>
    <property type="gene ID" value="ENSG00000121940.17"/>
</dbReference>
<dbReference type="Ensembl" id="ENST00000690874.1">
    <molecule id="Q96S66-1"/>
    <property type="protein sequence ID" value="ENSP00000510602.1"/>
    <property type="gene ID" value="ENSG00000121940.17"/>
</dbReference>
<dbReference type="Ensembl" id="ENST00000691513.1">
    <molecule id="Q96S66-1"/>
    <property type="protein sequence ID" value="ENSP00000509584.1"/>
    <property type="gene ID" value="ENSG00000121940.17"/>
</dbReference>
<dbReference type="Ensembl" id="ENST00000691556.1">
    <molecule id="Q96S66-1"/>
    <property type="protein sequence ID" value="ENSP00000509451.1"/>
    <property type="gene ID" value="ENSG00000121940.17"/>
</dbReference>
<dbReference type="Ensembl" id="ENST00000691731.1">
    <molecule id="Q96S66-1"/>
    <property type="protein sequence ID" value="ENSP00000509533.1"/>
    <property type="gene ID" value="ENSG00000121940.17"/>
</dbReference>
<dbReference type="Ensembl" id="ENST00000692404.1">
    <molecule id="Q96S66-1"/>
    <property type="protein sequence ID" value="ENSP00000510666.1"/>
    <property type="gene ID" value="ENSG00000121940.17"/>
</dbReference>
<dbReference type="Ensembl" id="ENST00000692511.1">
    <molecule id="Q96S66-1"/>
    <property type="protein sequence ID" value="ENSP00000510067.1"/>
    <property type="gene ID" value="ENSG00000121940.17"/>
</dbReference>
<dbReference type="Ensembl" id="ENST00000692795.1">
    <molecule id="Q96S66-1"/>
    <property type="protein sequence ID" value="ENSP00000509960.1"/>
    <property type="gene ID" value="ENSG00000121940.17"/>
</dbReference>
<dbReference type="Ensembl" id="ENST00000693089.1">
    <molecule id="Q96S66-1"/>
    <property type="protein sequence ID" value="ENSP00000509330.1"/>
    <property type="gene ID" value="ENSG00000121940.17"/>
</dbReference>
<dbReference type="Ensembl" id="ENST00000693336.1">
    <molecule id="Q96S66-1"/>
    <property type="protein sequence ID" value="ENSP00000509936.1"/>
    <property type="gene ID" value="ENSG00000121940.17"/>
</dbReference>
<dbReference type="Ensembl" id="ENST00000693673.1">
    <molecule id="Q96S66-1"/>
    <property type="protein sequence ID" value="ENSP00000509782.1"/>
    <property type="gene ID" value="ENSG00000121940.17"/>
</dbReference>
<dbReference type="GeneID" id="23155"/>
<dbReference type="KEGG" id="hsa:23155"/>
<dbReference type="MANE-Select" id="ENST00000369969.7">
    <property type="protein sequence ID" value="ENSP00000358986.3"/>
    <property type="RefSeq nucleotide sequence ID" value="NM_001377458.1"/>
    <property type="RefSeq protein sequence ID" value="NP_001364387.1"/>
</dbReference>
<dbReference type="UCSC" id="uc009wes.2">
    <molecule id="Q96S66-1"/>
    <property type="organism name" value="human"/>
</dbReference>
<dbReference type="AGR" id="HGNC:29675"/>
<dbReference type="CTD" id="23155"/>
<dbReference type="DisGeNET" id="23155"/>
<dbReference type="GeneCards" id="CLCC1"/>
<dbReference type="HGNC" id="HGNC:29675">
    <property type="gene designation" value="CLCC1"/>
</dbReference>
<dbReference type="HPA" id="ENSG00000121940">
    <property type="expression patterns" value="Low tissue specificity"/>
</dbReference>
<dbReference type="MalaCards" id="CLCC1"/>
<dbReference type="MIM" id="609913">
    <property type="type" value="phenotype"/>
</dbReference>
<dbReference type="MIM" id="617539">
    <property type="type" value="gene"/>
</dbReference>
<dbReference type="neXtProt" id="NX_Q96S66"/>
<dbReference type="OpenTargets" id="ENSG00000121940"/>
<dbReference type="PharmGKB" id="PA142672105"/>
<dbReference type="VEuPathDB" id="HostDB:ENSG00000121940"/>
<dbReference type="eggNOG" id="ENOG502QSP7">
    <property type="taxonomic scope" value="Eukaryota"/>
</dbReference>
<dbReference type="GeneTree" id="ENSGT00390000016611"/>
<dbReference type="HOGENOM" id="CLU_034552_1_1_1"/>
<dbReference type="InParanoid" id="Q96S66"/>
<dbReference type="OMA" id="VQDDEWI"/>
<dbReference type="OrthoDB" id="10037397at2759"/>
<dbReference type="PAN-GO" id="Q96S66">
    <property type="GO annotations" value="2 GO annotations based on evolutionary models"/>
</dbReference>
<dbReference type="PhylomeDB" id="Q96S66"/>
<dbReference type="TreeFam" id="TF328890"/>
<dbReference type="PathwayCommons" id="Q96S66"/>
<dbReference type="SignaLink" id="Q96S66"/>
<dbReference type="SIGNOR" id="Q96S66"/>
<dbReference type="BioGRID-ORCS" id="23155">
    <property type="hits" value="105 hits in 1160 CRISPR screens"/>
</dbReference>
<dbReference type="ChiTaRS" id="CLCC1">
    <property type="organism name" value="human"/>
</dbReference>
<dbReference type="GeneWiki" id="CLCC1"/>
<dbReference type="GenomeRNAi" id="23155"/>
<dbReference type="Pharos" id="Q96S66">
    <property type="development level" value="Tbio"/>
</dbReference>
<dbReference type="PRO" id="PR:Q96S66"/>
<dbReference type="Proteomes" id="UP000005640">
    <property type="component" value="Chromosome 1"/>
</dbReference>
<dbReference type="RNAct" id="Q96S66">
    <property type="molecule type" value="protein"/>
</dbReference>
<dbReference type="Bgee" id="ENSG00000121940">
    <property type="expression patterns" value="Expressed in tendon of biceps brachii and 202 other cell types or tissues"/>
</dbReference>
<dbReference type="ExpressionAtlas" id="Q96S66">
    <property type="expression patterns" value="baseline and differential"/>
</dbReference>
<dbReference type="GO" id="GO:0034707">
    <property type="term" value="C:chloride channel complex"/>
    <property type="evidence" value="ECO:0007669"/>
    <property type="project" value="UniProtKB-KW"/>
</dbReference>
<dbReference type="GO" id="GO:0005783">
    <property type="term" value="C:endoplasmic reticulum"/>
    <property type="evidence" value="ECO:0000314"/>
    <property type="project" value="HPA"/>
</dbReference>
<dbReference type="GO" id="GO:0005789">
    <property type="term" value="C:endoplasmic reticulum membrane"/>
    <property type="evidence" value="ECO:0000314"/>
    <property type="project" value="UniProtKB"/>
</dbReference>
<dbReference type="GO" id="GO:0043231">
    <property type="term" value="C:intracellular membrane-bounded organelle"/>
    <property type="evidence" value="ECO:0000314"/>
    <property type="project" value="HPA"/>
</dbReference>
<dbReference type="GO" id="GO:0016020">
    <property type="term" value="C:membrane"/>
    <property type="evidence" value="ECO:0007005"/>
    <property type="project" value="UniProtKB"/>
</dbReference>
<dbReference type="GO" id="GO:0044233">
    <property type="term" value="C:mitochondria-associated endoplasmic reticulum membrane contact site"/>
    <property type="evidence" value="ECO:0000314"/>
    <property type="project" value="UniProtKB"/>
</dbReference>
<dbReference type="GO" id="GO:0005254">
    <property type="term" value="F:chloride channel activity"/>
    <property type="evidence" value="ECO:0000314"/>
    <property type="project" value="UniProtKB"/>
</dbReference>
<dbReference type="GO" id="GO:0032469">
    <property type="term" value="P:endoplasmic reticulum calcium ion homeostasis"/>
    <property type="evidence" value="ECO:0000315"/>
    <property type="project" value="UniProtKB"/>
</dbReference>
<dbReference type="InterPro" id="IPR009231">
    <property type="entry name" value="Chloride_chnl_CLIC-like"/>
</dbReference>
<dbReference type="PANTHER" id="PTHR34093">
    <property type="entry name" value="CHLORIDE CHANNEL CLIC-LIKE PROTEIN 1"/>
    <property type="match status" value="1"/>
</dbReference>
<dbReference type="PANTHER" id="PTHR34093:SF1">
    <property type="entry name" value="CHLORIDE CHANNEL CLIC-LIKE PROTEIN 1"/>
    <property type="match status" value="1"/>
</dbReference>
<dbReference type="Pfam" id="PF05934">
    <property type="entry name" value="MCLC"/>
    <property type="match status" value="1"/>
</dbReference>
<organism>
    <name type="scientific">Homo sapiens</name>
    <name type="common">Human</name>
    <dbReference type="NCBI Taxonomy" id="9606"/>
    <lineage>
        <taxon>Eukaryota</taxon>
        <taxon>Metazoa</taxon>
        <taxon>Chordata</taxon>
        <taxon>Craniata</taxon>
        <taxon>Vertebrata</taxon>
        <taxon>Euteleostomi</taxon>
        <taxon>Mammalia</taxon>
        <taxon>Eutheria</taxon>
        <taxon>Euarchontoglires</taxon>
        <taxon>Primates</taxon>
        <taxon>Haplorrhini</taxon>
        <taxon>Catarrhini</taxon>
        <taxon>Hominidae</taxon>
        <taxon>Homo</taxon>
    </lineage>
</organism>
<accession>Q96S66</accession>
<accession>O94861</accession>
<accession>Q8WYP8</accession>
<accession>Q8WYP9</accession>
<accession>Q9BU25</accession>